<gene>
    <name evidence="1 3" type="primary">ruvA</name>
    <name type="ordered locus">TM_0165</name>
</gene>
<organism>
    <name type="scientific">Thermotoga maritima (strain ATCC 43589 / DSM 3109 / JCM 10099 / NBRC 100826 / MSB8)</name>
    <dbReference type="NCBI Taxonomy" id="243274"/>
    <lineage>
        <taxon>Bacteria</taxon>
        <taxon>Thermotogati</taxon>
        <taxon>Thermotogota</taxon>
        <taxon>Thermotogae</taxon>
        <taxon>Thermotogales</taxon>
        <taxon>Thermotogaceae</taxon>
        <taxon>Thermotoga</taxon>
    </lineage>
</organism>
<feature type="chain" id="PRO_0000094700" description="Holliday junction branch migration complex subunit RuvA">
    <location>
        <begin position="1"/>
        <end position="188"/>
    </location>
</feature>
<feature type="region of interest" description="Domain I" evidence="1">
    <location>
        <begin position="1"/>
        <end position="64"/>
    </location>
</feature>
<feature type="region of interest" description="Domain II" evidence="1">
    <location>
        <begin position="65"/>
        <end position="143"/>
    </location>
</feature>
<feature type="region of interest" description="Domain III" evidence="1">
    <location>
        <begin position="143"/>
        <end position="186"/>
    </location>
</feature>
<feature type="region of interest" description="Flexible linker" evidence="1">
    <location>
        <position position="143"/>
    </location>
</feature>
<reference key="1">
    <citation type="journal article" date="1999" name="Nature">
        <title>Evidence for lateral gene transfer between Archaea and Bacteria from genome sequence of Thermotoga maritima.</title>
        <authorList>
            <person name="Nelson K.E."/>
            <person name="Clayton R.A."/>
            <person name="Gill S.R."/>
            <person name="Gwinn M.L."/>
            <person name="Dodson R.J."/>
            <person name="Haft D.H."/>
            <person name="Hickey E.K."/>
            <person name="Peterson J.D."/>
            <person name="Nelson W.C."/>
            <person name="Ketchum K.A."/>
            <person name="McDonald L.A."/>
            <person name="Utterback T.R."/>
            <person name="Malek J.A."/>
            <person name="Linher K.D."/>
            <person name="Garrett M.M."/>
            <person name="Stewart A.M."/>
            <person name="Cotton M.D."/>
            <person name="Pratt M.S."/>
            <person name="Phillips C.A."/>
            <person name="Richardson D.L."/>
            <person name="Heidelberg J.F."/>
            <person name="Sutton G.G."/>
            <person name="Fleischmann R.D."/>
            <person name="Eisen J.A."/>
            <person name="White O."/>
            <person name="Salzberg S.L."/>
            <person name="Smith H.O."/>
            <person name="Venter J.C."/>
            <person name="Fraser C.M."/>
        </authorList>
    </citation>
    <scope>NUCLEOTIDE SEQUENCE [LARGE SCALE GENOMIC DNA]</scope>
    <source>
        <strain>ATCC 43589 / DSM 3109 / JCM 10099 / NBRC 100826 / MSB8</strain>
    </source>
</reference>
<reference key="2">
    <citation type="journal article" date="2001" name="J. Mol. Biol.">
        <title>Structure and mechanism of the RuvB Holliday junction branch migration motor.</title>
        <authorList>
            <person name="Putnam C.D."/>
            <person name="Clancy S.B."/>
            <person name="Tsuruta H."/>
            <person name="Gonzalez S."/>
            <person name="Wetmur J.G."/>
            <person name="Tainer J.A."/>
        </authorList>
    </citation>
    <scope>FUNCTION</scope>
</reference>
<keyword id="KW-0963">Cytoplasm</keyword>
<keyword id="KW-0227">DNA damage</keyword>
<keyword id="KW-0233">DNA recombination</keyword>
<keyword id="KW-0234">DNA repair</keyword>
<keyword id="KW-0238">DNA-binding</keyword>
<keyword id="KW-1185">Reference proteome</keyword>
<proteinExistence type="inferred from homology"/>
<sequence>MIAGISGRVLKKSGNVLLVETKSGVVFEIVCDVQTSEEVKEGGECFLHTFLSVSQDGITLYGFSNEMKKELFLSLTKVSRLGPKTALKIISNEDAETLVAMIASQDVEGLSKLPGISKKTAERIVMELKDEFESAGIKDMRIYHESLEALVSLGYPEKQAREAVKQVYREGMKTSELIKEALKFLSHR</sequence>
<accession>Q9WY12</accession>
<protein>
    <recommendedName>
        <fullName evidence="1">Holliday junction branch migration complex subunit RuvA</fullName>
    </recommendedName>
</protein>
<name>RUVA_THEMA</name>
<evidence type="ECO:0000255" key="1">
    <source>
        <dbReference type="HAMAP-Rule" id="MF_00031"/>
    </source>
</evidence>
<evidence type="ECO:0000269" key="2">
    <source>
    </source>
</evidence>
<evidence type="ECO:0000303" key="3">
    <source>
    </source>
</evidence>
<dbReference type="EMBL" id="AE000512">
    <property type="protein sequence ID" value="AAD35258.1"/>
    <property type="molecule type" value="Genomic_DNA"/>
</dbReference>
<dbReference type="PIR" id="C72411">
    <property type="entry name" value="C72411"/>
</dbReference>
<dbReference type="RefSeq" id="NP_227980.1">
    <property type="nucleotide sequence ID" value="NC_000853.1"/>
</dbReference>
<dbReference type="RefSeq" id="WP_004082791.1">
    <property type="nucleotide sequence ID" value="NZ_CP011107.1"/>
</dbReference>
<dbReference type="SMR" id="Q9WY12"/>
<dbReference type="FunCoup" id="Q9WY12">
    <property type="interactions" value="301"/>
</dbReference>
<dbReference type="STRING" id="243274.TM_0165"/>
<dbReference type="PaxDb" id="243274-THEMA_03975"/>
<dbReference type="DNASU" id="897004"/>
<dbReference type="EnsemblBacteria" id="AAD35258">
    <property type="protein sequence ID" value="AAD35258"/>
    <property type="gene ID" value="TM_0165"/>
</dbReference>
<dbReference type="KEGG" id="tma:TM0165"/>
<dbReference type="KEGG" id="tmi:THEMA_03975"/>
<dbReference type="KEGG" id="tmm:Tmari_0163"/>
<dbReference type="KEGG" id="tmw:THMA_0161"/>
<dbReference type="PATRIC" id="fig|243274.5.peg.166"/>
<dbReference type="eggNOG" id="COG0632">
    <property type="taxonomic scope" value="Bacteria"/>
</dbReference>
<dbReference type="InParanoid" id="Q9WY12"/>
<dbReference type="OrthoDB" id="5293449at2"/>
<dbReference type="Proteomes" id="UP000008183">
    <property type="component" value="Chromosome"/>
</dbReference>
<dbReference type="GO" id="GO:0005737">
    <property type="term" value="C:cytoplasm"/>
    <property type="evidence" value="ECO:0007669"/>
    <property type="project" value="UniProtKB-SubCell"/>
</dbReference>
<dbReference type="GO" id="GO:0009379">
    <property type="term" value="C:Holliday junction helicase complex"/>
    <property type="evidence" value="ECO:0007669"/>
    <property type="project" value="InterPro"/>
</dbReference>
<dbReference type="GO" id="GO:0048476">
    <property type="term" value="C:Holliday junction resolvase complex"/>
    <property type="evidence" value="ECO:0007669"/>
    <property type="project" value="UniProtKB-UniRule"/>
</dbReference>
<dbReference type="GO" id="GO:0005524">
    <property type="term" value="F:ATP binding"/>
    <property type="evidence" value="ECO:0007669"/>
    <property type="project" value="InterPro"/>
</dbReference>
<dbReference type="GO" id="GO:0000400">
    <property type="term" value="F:four-way junction DNA binding"/>
    <property type="evidence" value="ECO:0007669"/>
    <property type="project" value="UniProtKB-UniRule"/>
</dbReference>
<dbReference type="GO" id="GO:0009378">
    <property type="term" value="F:four-way junction helicase activity"/>
    <property type="evidence" value="ECO:0000318"/>
    <property type="project" value="GO_Central"/>
</dbReference>
<dbReference type="GO" id="GO:0006310">
    <property type="term" value="P:DNA recombination"/>
    <property type="evidence" value="ECO:0007669"/>
    <property type="project" value="UniProtKB-UniRule"/>
</dbReference>
<dbReference type="GO" id="GO:0006281">
    <property type="term" value="P:DNA repair"/>
    <property type="evidence" value="ECO:0007669"/>
    <property type="project" value="UniProtKB-UniRule"/>
</dbReference>
<dbReference type="GO" id="GO:0009432">
    <property type="term" value="P:SOS response"/>
    <property type="evidence" value="ECO:0000318"/>
    <property type="project" value="GO_Central"/>
</dbReference>
<dbReference type="CDD" id="cd14332">
    <property type="entry name" value="UBA_RuvA_C"/>
    <property type="match status" value="1"/>
</dbReference>
<dbReference type="Gene3D" id="1.10.150.20">
    <property type="entry name" value="5' to 3' exonuclease, C-terminal subdomain"/>
    <property type="match status" value="1"/>
</dbReference>
<dbReference type="Gene3D" id="1.10.8.10">
    <property type="entry name" value="DNA helicase RuvA subunit, C-terminal domain"/>
    <property type="match status" value="1"/>
</dbReference>
<dbReference type="Gene3D" id="2.40.50.140">
    <property type="entry name" value="Nucleic acid-binding proteins"/>
    <property type="match status" value="1"/>
</dbReference>
<dbReference type="HAMAP" id="MF_00031">
    <property type="entry name" value="DNA_HJ_migration_RuvA"/>
    <property type="match status" value="1"/>
</dbReference>
<dbReference type="InterPro" id="IPR013849">
    <property type="entry name" value="DNA_helicase_Holl-junc_RuvA_I"/>
</dbReference>
<dbReference type="InterPro" id="IPR003583">
    <property type="entry name" value="Hlx-hairpin-Hlx_DNA-bd_motif"/>
</dbReference>
<dbReference type="InterPro" id="IPR012340">
    <property type="entry name" value="NA-bd_OB-fold"/>
</dbReference>
<dbReference type="InterPro" id="IPR000085">
    <property type="entry name" value="RuvA"/>
</dbReference>
<dbReference type="InterPro" id="IPR010994">
    <property type="entry name" value="RuvA_2-like"/>
</dbReference>
<dbReference type="InterPro" id="IPR011114">
    <property type="entry name" value="RuvA_C"/>
</dbReference>
<dbReference type="InterPro" id="IPR036267">
    <property type="entry name" value="RuvA_C_sf"/>
</dbReference>
<dbReference type="NCBIfam" id="TIGR00084">
    <property type="entry name" value="ruvA"/>
    <property type="match status" value="1"/>
</dbReference>
<dbReference type="Pfam" id="PF14520">
    <property type="entry name" value="HHH_5"/>
    <property type="match status" value="1"/>
</dbReference>
<dbReference type="Pfam" id="PF07499">
    <property type="entry name" value="RuvA_C"/>
    <property type="match status" value="1"/>
</dbReference>
<dbReference type="Pfam" id="PF01330">
    <property type="entry name" value="RuvA_N"/>
    <property type="match status" value="1"/>
</dbReference>
<dbReference type="SMART" id="SM00278">
    <property type="entry name" value="HhH1"/>
    <property type="match status" value="2"/>
</dbReference>
<dbReference type="SUPFAM" id="SSF46929">
    <property type="entry name" value="DNA helicase RuvA subunit, C-terminal domain"/>
    <property type="match status" value="1"/>
</dbReference>
<dbReference type="SUPFAM" id="SSF50249">
    <property type="entry name" value="Nucleic acid-binding proteins"/>
    <property type="match status" value="1"/>
</dbReference>
<dbReference type="SUPFAM" id="SSF47781">
    <property type="entry name" value="RuvA domain 2-like"/>
    <property type="match status" value="1"/>
</dbReference>
<comment type="function">
    <text evidence="1 2">The RuvA-RuvB-RuvC complex processes Holliday junction (HJ) DNA during genetic recombination and DNA repair, while the RuvA-RuvB complex plays an important role in the rescue of blocked DNA replication forks via replication fork reversal (RFR). RuvA specifically binds to HJ cruciform DNA, conferring on it an open structure. The RuvB hexamer acts as an ATP-dependent pump, pulling dsDNA into and through the RuvAB complex. HJ branch migration allows RuvC to scan DNA until it finds its consensus sequence, where it cleaves and resolves the cruciform DNA (By similarity). Promotes Holliday junction (HJ) branch migration in conjunction with RuvB (PubMed:11478862).</text>
</comment>
<comment type="subunit">
    <text evidence="1">Homotetramer. Forms an RuvA(8)-RuvB(12)-Holliday junction (HJ) complex. HJ DNA is sandwiched between 2 RuvA tetramers; dsDNA enters through RuvA and exits via RuvB. An RuvB hexamer assembles on each DNA strand where it exits the tetramer. Each RuvB hexamer is contacted by two RuvA subunits (via domain III) on 2 adjacent RuvB subunits; this complex drives branch migration. In the full resolvosome a probable DNA-RuvA(4)-RuvB(12)-RuvC(2) complex forms which resolves the HJ.</text>
</comment>
<comment type="subcellular location">
    <subcellularLocation>
        <location evidence="1">Cytoplasm</location>
    </subcellularLocation>
</comment>
<comment type="domain">
    <text evidence="1">Has three domains with a flexible linker between the domains II and III and assumes an 'L' shape. Domain III is highly mobile and contacts RuvB.</text>
</comment>
<comment type="similarity">
    <text evidence="1">Belongs to the RuvA family.</text>
</comment>